<sequence>MLDIKWIRENPEALDAALAKRGAEPLAQTLVALDEKRRSAVQKTQDLLSRRNAASKEIGAAMAQKNAELAEKLKAEVAEIKETLPAAEEEERTLSAELIDALSRIPNVPFDDVPVGKDEHDNAVARIVGEKPRWNHTPREHFEIGEALGYMDFERAAKLSGSRFTVLTGPLARLERALGQFMIDLHTREHGYTEVSSPLMVRAEAVFGTGSLPKFEEDLFKTTDGRYLIPTAEVTLTNLVREEILDQEKLPLRFTALTPSFRSEAGSAGRDTRGMLRQHQFWKCELVSITDAESSIAEHERMTACAEEVLKRLGLHFRTMTLCTGDMGFGSRKTYDLEVWLPGQNAFREISSCSVCGDFQARRMNARYRGKDDKNNKFVHTLNGSGTAVGRCLIAVLENYLNEDGSVTIPDVLLPYMGGLTKIERAA</sequence>
<keyword id="KW-0030">Aminoacyl-tRNA synthetase</keyword>
<keyword id="KW-0067">ATP-binding</keyword>
<keyword id="KW-0963">Cytoplasm</keyword>
<keyword id="KW-0436">Ligase</keyword>
<keyword id="KW-0547">Nucleotide-binding</keyword>
<keyword id="KW-0648">Protein biosynthesis</keyword>
<keyword id="KW-1185">Reference proteome</keyword>
<accession>Q2K967</accession>
<proteinExistence type="inferred from homology"/>
<reference key="1">
    <citation type="journal article" date="2006" name="Proc. Natl. Acad. Sci. U.S.A.">
        <title>The partitioned Rhizobium etli genome: genetic and metabolic redundancy in seven interacting replicons.</title>
        <authorList>
            <person name="Gonzalez V."/>
            <person name="Santamaria R.I."/>
            <person name="Bustos P."/>
            <person name="Hernandez-Gonzalez I."/>
            <person name="Medrano-Soto A."/>
            <person name="Moreno-Hagelsieb G."/>
            <person name="Janga S.C."/>
            <person name="Ramirez M.A."/>
            <person name="Jimenez-Jacinto V."/>
            <person name="Collado-Vides J."/>
            <person name="Davila G."/>
        </authorList>
    </citation>
    <scope>NUCLEOTIDE SEQUENCE [LARGE SCALE GENOMIC DNA]</scope>
    <source>
        <strain>ATCC 51251 / DSM 11541 / JCM 21823 / NBRC 15573 / CFN 42</strain>
    </source>
</reference>
<evidence type="ECO:0000255" key="1">
    <source>
        <dbReference type="HAMAP-Rule" id="MF_00176"/>
    </source>
</evidence>
<protein>
    <recommendedName>
        <fullName evidence="1">Serine--tRNA ligase</fullName>
        <ecNumber evidence="1">6.1.1.11</ecNumber>
    </recommendedName>
    <alternativeName>
        <fullName evidence="1">Seryl-tRNA synthetase</fullName>
        <shortName evidence="1">SerRS</shortName>
    </alternativeName>
    <alternativeName>
        <fullName evidence="1">Seryl-tRNA(Ser/Sec) synthetase</fullName>
    </alternativeName>
</protein>
<comment type="function">
    <text evidence="1">Catalyzes the attachment of serine to tRNA(Ser). Is also able to aminoacylate tRNA(Sec) with serine, to form the misacylated tRNA L-seryl-tRNA(Sec), which will be further converted into selenocysteinyl-tRNA(Sec).</text>
</comment>
<comment type="catalytic activity">
    <reaction evidence="1">
        <text>tRNA(Ser) + L-serine + ATP = L-seryl-tRNA(Ser) + AMP + diphosphate + H(+)</text>
        <dbReference type="Rhea" id="RHEA:12292"/>
        <dbReference type="Rhea" id="RHEA-COMP:9669"/>
        <dbReference type="Rhea" id="RHEA-COMP:9703"/>
        <dbReference type="ChEBI" id="CHEBI:15378"/>
        <dbReference type="ChEBI" id="CHEBI:30616"/>
        <dbReference type="ChEBI" id="CHEBI:33019"/>
        <dbReference type="ChEBI" id="CHEBI:33384"/>
        <dbReference type="ChEBI" id="CHEBI:78442"/>
        <dbReference type="ChEBI" id="CHEBI:78533"/>
        <dbReference type="ChEBI" id="CHEBI:456215"/>
        <dbReference type="EC" id="6.1.1.11"/>
    </reaction>
</comment>
<comment type="catalytic activity">
    <reaction evidence="1">
        <text>tRNA(Sec) + L-serine + ATP = L-seryl-tRNA(Sec) + AMP + diphosphate + H(+)</text>
        <dbReference type="Rhea" id="RHEA:42580"/>
        <dbReference type="Rhea" id="RHEA-COMP:9742"/>
        <dbReference type="Rhea" id="RHEA-COMP:10128"/>
        <dbReference type="ChEBI" id="CHEBI:15378"/>
        <dbReference type="ChEBI" id="CHEBI:30616"/>
        <dbReference type="ChEBI" id="CHEBI:33019"/>
        <dbReference type="ChEBI" id="CHEBI:33384"/>
        <dbReference type="ChEBI" id="CHEBI:78442"/>
        <dbReference type="ChEBI" id="CHEBI:78533"/>
        <dbReference type="ChEBI" id="CHEBI:456215"/>
        <dbReference type="EC" id="6.1.1.11"/>
    </reaction>
</comment>
<comment type="pathway">
    <text evidence="1">Aminoacyl-tRNA biosynthesis; selenocysteinyl-tRNA(Sec) biosynthesis; L-seryl-tRNA(Sec) from L-serine and tRNA(Sec): step 1/1.</text>
</comment>
<comment type="subunit">
    <text evidence="1">Homodimer. The tRNA molecule binds across the dimer.</text>
</comment>
<comment type="subcellular location">
    <subcellularLocation>
        <location evidence="1">Cytoplasm</location>
    </subcellularLocation>
</comment>
<comment type="domain">
    <text evidence="1">Consists of two distinct domains, a catalytic core and a N-terminal extension that is involved in tRNA binding.</text>
</comment>
<comment type="similarity">
    <text evidence="1">Belongs to the class-II aminoacyl-tRNA synthetase family. Type-1 seryl-tRNA synthetase subfamily.</text>
</comment>
<gene>
    <name evidence="1" type="primary">serS</name>
    <name type="ordered locus">RHE_CH01826</name>
</gene>
<name>SYS_RHIEC</name>
<organism>
    <name type="scientific">Rhizobium etli (strain ATCC 51251 / DSM 11541 / JCM 21823 / NBRC 15573 / CFN 42)</name>
    <dbReference type="NCBI Taxonomy" id="347834"/>
    <lineage>
        <taxon>Bacteria</taxon>
        <taxon>Pseudomonadati</taxon>
        <taxon>Pseudomonadota</taxon>
        <taxon>Alphaproteobacteria</taxon>
        <taxon>Hyphomicrobiales</taxon>
        <taxon>Rhizobiaceae</taxon>
        <taxon>Rhizobium/Agrobacterium group</taxon>
        <taxon>Rhizobium</taxon>
    </lineage>
</organism>
<dbReference type="EC" id="6.1.1.11" evidence="1"/>
<dbReference type="EMBL" id="CP000133">
    <property type="protein sequence ID" value="ABC90619.1"/>
    <property type="molecule type" value="Genomic_DNA"/>
</dbReference>
<dbReference type="RefSeq" id="WP_011425116.1">
    <property type="nucleotide sequence ID" value="NC_007761.1"/>
</dbReference>
<dbReference type="SMR" id="Q2K967"/>
<dbReference type="KEGG" id="ret:RHE_CH01826"/>
<dbReference type="eggNOG" id="COG0172">
    <property type="taxonomic scope" value="Bacteria"/>
</dbReference>
<dbReference type="HOGENOM" id="CLU_023797_1_1_5"/>
<dbReference type="OrthoDB" id="9804647at2"/>
<dbReference type="UniPathway" id="UPA00906">
    <property type="reaction ID" value="UER00895"/>
</dbReference>
<dbReference type="Proteomes" id="UP000001936">
    <property type="component" value="Chromosome"/>
</dbReference>
<dbReference type="GO" id="GO:0005737">
    <property type="term" value="C:cytoplasm"/>
    <property type="evidence" value="ECO:0007669"/>
    <property type="project" value="UniProtKB-SubCell"/>
</dbReference>
<dbReference type="GO" id="GO:0005524">
    <property type="term" value="F:ATP binding"/>
    <property type="evidence" value="ECO:0007669"/>
    <property type="project" value="UniProtKB-UniRule"/>
</dbReference>
<dbReference type="GO" id="GO:0004828">
    <property type="term" value="F:serine-tRNA ligase activity"/>
    <property type="evidence" value="ECO:0007669"/>
    <property type="project" value="UniProtKB-UniRule"/>
</dbReference>
<dbReference type="GO" id="GO:0016260">
    <property type="term" value="P:selenocysteine biosynthetic process"/>
    <property type="evidence" value="ECO:0007669"/>
    <property type="project" value="UniProtKB-UniRule"/>
</dbReference>
<dbReference type="GO" id="GO:0006434">
    <property type="term" value="P:seryl-tRNA aminoacylation"/>
    <property type="evidence" value="ECO:0007669"/>
    <property type="project" value="UniProtKB-UniRule"/>
</dbReference>
<dbReference type="CDD" id="cd00770">
    <property type="entry name" value="SerRS_core"/>
    <property type="match status" value="1"/>
</dbReference>
<dbReference type="Gene3D" id="3.30.930.10">
    <property type="entry name" value="Bira Bifunctional Protein, Domain 2"/>
    <property type="match status" value="1"/>
</dbReference>
<dbReference type="Gene3D" id="1.10.287.40">
    <property type="entry name" value="Serine-tRNA synthetase, tRNA binding domain"/>
    <property type="match status" value="1"/>
</dbReference>
<dbReference type="HAMAP" id="MF_00176">
    <property type="entry name" value="Ser_tRNA_synth_type1"/>
    <property type="match status" value="1"/>
</dbReference>
<dbReference type="InterPro" id="IPR002314">
    <property type="entry name" value="aa-tRNA-synt_IIb"/>
</dbReference>
<dbReference type="InterPro" id="IPR006195">
    <property type="entry name" value="aa-tRNA-synth_II"/>
</dbReference>
<dbReference type="InterPro" id="IPR045864">
    <property type="entry name" value="aa-tRNA-synth_II/BPL/LPL"/>
</dbReference>
<dbReference type="InterPro" id="IPR002317">
    <property type="entry name" value="Ser-tRNA-ligase_type_1"/>
</dbReference>
<dbReference type="InterPro" id="IPR015866">
    <property type="entry name" value="Ser-tRNA-synth_1_N"/>
</dbReference>
<dbReference type="InterPro" id="IPR042103">
    <property type="entry name" value="SerRS_1_N_sf"/>
</dbReference>
<dbReference type="InterPro" id="IPR033729">
    <property type="entry name" value="SerRS_core"/>
</dbReference>
<dbReference type="InterPro" id="IPR010978">
    <property type="entry name" value="tRNA-bd_arm"/>
</dbReference>
<dbReference type="NCBIfam" id="TIGR00414">
    <property type="entry name" value="serS"/>
    <property type="match status" value="1"/>
</dbReference>
<dbReference type="PANTHER" id="PTHR43697:SF1">
    <property type="entry name" value="SERINE--TRNA LIGASE"/>
    <property type="match status" value="1"/>
</dbReference>
<dbReference type="PANTHER" id="PTHR43697">
    <property type="entry name" value="SERYL-TRNA SYNTHETASE"/>
    <property type="match status" value="1"/>
</dbReference>
<dbReference type="Pfam" id="PF02403">
    <property type="entry name" value="Seryl_tRNA_N"/>
    <property type="match status" value="1"/>
</dbReference>
<dbReference type="Pfam" id="PF00587">
    <property type="entry name" value="tRNA-synt_2b"/>
    <property type="match status" value="1"/>
</dbReference>
<dbReference type="PIRSF" id="PIRSF001529">
    <property type="entry name" value="Ser-tRNA-synth_IIa"/>
    <property type="match status" value="1"/>
</dbReference>
<dbReference type="PRINTS" id="PR00981">
    <property type="entry name" value="TRNASYNTHSER"/>
</dbReference>
<dbReference type="SUPFAM" id="SSF55681">
    <property type="entry name" value="Class II aaRS and biotin synthetases"/>
    <property type="match status" value="1"/>
</dbReference>
<dbReference type="SUPFAM" id="SSF46589">
    <property type="entry name" value="tRNA-binding arm"/>
    <property type="match status" value="1"/>
</dbReference>
<dbReference type="PROSITE" id="PS50862">
    <property type="entry name" value="AA_TRNA_LIGASE_II"/>
    <property type="match status" value="1"/>
</dbReference>
<feature type="chain" id="PRO_1000019789" description="Serine--tRNA ligase">
    <location>
        <begin position="1"/>
        <end position="427"/>
    </location>
</feature>
<feature type="binding site" evidence="1">
    <location>
        <begin position="231"/>
        <end position="233"/>
    </location>
    <ligand>
        <name>L-serine</name>
        <dbReference type="ChEBI" id="CHEBI:33384"/>
    </ligand>
</feature>
<feature type="binding site" evidence="1">
    <location>
        <begin position="262"/>
        <end position="264"/>
    </location>
    <ligand>
        <name>ATP</name>
        <dbReference type="ChEBI" id="CHEBI:30616"/>
    </ligand>
</feature>
<feature type="binding site" evidence="1">
    <location>
        <position position="285"/>
    </location>
    <ligand>
        <name>L-serine</name>
        <dbReference type="ChEBI" id="CHEBI:33384"/>
    </ligand>
</feature>
<feature type="binding site" evidence="1">
    <location>
        <begin position="349"/>
        <end position="352"/>
    </location>
    <ligand>
        <name>ATP</name>
        <dbReference type="ChEBI" id="CHEBI:30616"/>
    </ligand>
</feature>
<feature type="binding site" evidence="1">
    <location>
        <position position="385"/>
    </location>
    <ligand>
        <name>L-serine</name>
        <dbReference type="ChEBI" id="CHEBI:33384"/>
    </ligand>
</feature>